<name>RL10_CHLCH</name>
<sequence length="172" mass="18788">MKRDTKQQIVQEVAEKISQAQGIYLTEFQGLTVEKMSELRGEFRKAGVEYRVVKNTLIRKALQDMAGADKLAPALKSTTAIAFGIDDPVAPAKVIKKFSKANDQLKFKMAAIDGAVYGADQLTLLSEMLSKTENIGRTAGLINNVIGSVPMVVNAVMRNMVCALDQIAKQKQ</sequence>
<keyword id="KW-0687">Ribonucleoprotein</keyword>
<keyword id="KW-0689">Ribosomal protein</keyword>
<keyword id="KW-0694">RNA-binding</keyword>
<keyword id="KW-0699">rRNA-binding</keyword>
<evidence type="ECO:0000255" key="1">
    <source>
        <dbReference type="HAMAP-Rule" id="MF_00362"/>
    </source>
</evidence>
<evidence type="ECO:0000305" key="2"/>
<accession>Q3ATP7</accession>
<dbReference type="EMBL" id="CP000108">
    <property type="protein sequence ID" value="ABB27628.1"/>
    <property type="molecule type" value="Genomic_DNA"/>
</dbReference>
<dbReference type="SMR" id="Q3ATP7"/>
<dbReference type="STRING" id="340177.Cag_0355"/>
<dbReference type="KEGG" id="cch:Cag_0355"/>
<dbReference type="eggNOG" id="COG0244">
    <property type="taxonomic scope" value="Bacteria"/>
</dbReference>
<dbReference type="HOGENOM" id="CLU_092227_3_0_10"/>
<dbReference type="OrthoDB" id="1523686at2"/>
<dbReference type="GO" id="GO:0015934">
    <property type="term" value="C:large ribosomal subunit"/>
    <property type="evidence" value="ECO:0007669"/>
    <property type="project" value="InterPro"/>
</dbReference>
<dbReference type="GO" id="GO:0070180">
    <property type="term" value="F:large ribosomal subunit rRNA binding"/>
    <property type="evidence" value="ECO:0007669"/>
    <property type="project" value="UniProtKB-UniRule"/>
</dbReference>
<dbReference type="GO" id="GO:0003735">
    <property type="term" value="F:structural constituent of ribosome"/>
    <property type="evidence" value="ECO:0007669"/>
    <property type="project" value="InterPro"/>
</dbReference>
<dbReference type="GO" id="GO:0006412">
    <property type="term" value="P:translation"/>
    <property type="evidence" value="ECO:0007669"/>
    <property type="project" value="UniProtKB-UniRule"/>
</dbReference>
<dbReference type="CDD" id="cd05797">
    <property type="entry name" value="Ribosomal_L10"/>
    <property type="match status" value="1"/>
</dbReference>
<dbReference type="Gene3D" id="3.30.70.1730">
    <property type="match status" value="1"/>
</dbReference>
<dbReference type="Gene3D" id="6.10.250.290">
    <property type="match status" value="1"/>
</dbReference>
<dbReference type="HAMAP" id="MF_00362">
    <property type="entry name" value="Ribosomal_uL10"/>
    <property type="match status" value="1"/>
</dbReference>
<dbReference type="InterPro" id="IPR001790">
    <property type="entry name" value="Ribosomal_uL10"/>
</dbReference>
<dbReference type="InterPro" id="IPR043141">
    <property type="entry name" value="Ribosomal_uL10-like_sf"/>
</dbReference>
<dbReference type="InterPro" id="IPR022973">
    <property type="entry name" value="Ribosomal_uL10_bac"/>
</dbReference>
<dbReference type="InterPro" id="IPR047865">
    <property type="entry name" value="Ribosomal_uL10_bac_type"/>
</dbReference>
<dbReference type="InterPro" id="IPR002363">
    <property type="entry name" value="Ribosomal_uL10_CS_bac"/>
</dbReference>
<dbReference type="NCBIfam" id="NF000955">
    <property type="entry name" value="PRK00099.1-1"/>
    <property type="match status" value="1"/>
</dbReference>
<dbReference type="PANTHER" id="PTHR11560">
    <property type="entry name" value="39S RIBOSOMAL PROTEIN L10, MITOCHONDRIAL"/>
    <property type="match status" value="1"/>
</dbReference>
<dbReference type="Pfam" id="PF00466">
    <property type="entry name" value="Ribosomal_L10"/>
    <property type="match status" value="1"/>
</dbReference>
<dbReference type="SUPFAM" id="SSF160369">
    <property type="entry name" value="Ribosomal protein L10-like"/>
    <property type="match status" value="1"/>
</dbReference>
<dbReference type="PROSITE" id="PS01109">
    <property type="entry name" value="RIBOSOMAL_L10"/>
    <property type="match status" value="1"/>
</dbReference>
<reference key="1">
    <citation type="submission" date="2005-08" db="EMBL/GenBank/DDBJ databases">
        <title>Complete sequence of Chlorobium chlorochromatii CaD3.</title>
        <authorList>
            <consortium name="US DOE Joint Genome Institute"/>
            <person name="Copeland A."/>
            <person name="Lucas S."/>
            <person name="Lapidus A."/>
            <person name="Barry K."/>
            <person name="Detter J.C."/>
            <person name="Glavina T."/>
            <person name="Hammon N."/>
            <person name="Israni S."/>
            <person name="Pitluck S."/>
            <person name="Bryant D."/>
            <person name="Schmutz J."/>
            <person name="Larimer F."/>
            <person name="Land M."/>
            <person name="Kyrpides N."/>
            <person name="Ivanova N."/>
            <person name="Richardson P."/>
        </authorList>
    </citation>
    <scope>NUCLEOTIDE SEQUENCE [LARGE SCALE GENOMIC DNA]</scope>
    <source>
        <strain>CaD3</strain>
    </source>
</reference>
<comment type="function">
    <text evidence="1">Forms part of the ribosomal stalk, playing a central role in the interaction of the ribosome with GTP-bound translation factors.</text>
</comment>
<comment type="subunit">
    <text evidence="1">Part of the ribosomal stalk of the 50S ribosomal subunit. The N-terminus interacts with L11 and the large rRNA to form the base of the stalk. The C-terminus forms an elongated spine to which L12 dimers bind in a sequential fashion forming a multimeric L10(L12)X complex.</text>
</comment>
<comment type="similarity">
    <text evidence="1">Belongs to the universal ribosomal protein uL10 family.</text>
</comment>
<gene>
    <name evidence="1" type="primary">rplJ</name>
    <name type="ordered locus">Cag_0355</name>
</gene>
<protein>
    <recommendedName>
        <fullName evidence="1">Large ribosomal subunit protein uL10</fullName>
    </recommendedName>
    <alternativeName>
        <fullName evidence="2">50S ribosomal protein L10</fullName>
    </alternativeName>
</protein>
<proteinExistence type="inferred from homology"/>
<organism>
    <name type="scientific">Chlorobium chlorochromatii (strain CaD3)</name>
    <dbReference type="NCBI Taxonomy" id="340177"/>
    <lineage>
        <taxon>Bacteria</taxon>
        <taxon>Pseudomonadati</taxon>
        <taxon>Chlorobiota</taxon>
        <taxon>Chlorobiia</taxon>
        <taxon>Chlorobiales</taxon>
        <taxon>Chlorobiaceae</taxon>
        <taxon>Chlorobium/Pelodictyon group</taxon>
        <taxon>Chlorobium</taxon>
    </lineage>
</organism>
<feature type="chain" id="PRO_0000234843" description="Large ribosomal subunit protein uL10">
    <location>
        <begin position="1"/>
        <end position="172"/>
    </location>
</feature>